<dbReference type="EC" id="6.1.1.14" evidence="4"/>
<dbReference type="EC" id="2.7.7.-" evidence="1"/>
<dbReference type="EMBL" id="AJ002062">
    <property type="protein sequence ID" value="CAA05162.1"/>
    <property type="molecule type" value="mRNA"/>
</dbReference>
<dbReference type="EMBL" id="AC008030">
    <property type="protein sequence ID" value="AAG10608.1"/>
    <property type="molecule type" value="Genomic_DNA"/>
</dbReference>
<dbReference type="EMBL" id="CP002684">
    <property type="protein sequence ID" value="AEE31145.1"/>
    <property type="molecule type" value="Genomic_DNA"/>
</dbReference>
<dbReference type="EMBL" id="AY050895">
    <property type="protein sequence ID" value="AAK92832.1"/>
    <property type="molecule type" value="mRNA"/>
</dbReference>
<dbReference type="EMBL" id="AY086930">
    <property type="protein sequence ID" value="AAM64494.1"/>
    <property type="status" value="ALT_INIT"/>
    <property type="molecule type" value="mRNA"/>
</dbReference>
<dbReference type="PIR" id="D86422">
    <property type="entry name" value="D86422"/>
</dbReference>
<dbReference type="RefSeq" id="NP_564337.1">
    <molecule id="O23627-1"/>
    <property type="nucleotide sequence ID" value="NM_102728.3"/>
</dbReference>
<dbReference type="SMR" id="O23627"/>
<dbReference type="BioGRID" id="25101">
    <property type="interactions" value="11"/>
</dbReference>
<dbReference type="FunCoup" id="O23627">
    <property type="interactions" value="4171"/>
</dbReference>
<dbReference type="STRING" id="3702.O23627"/>
<dbReference type="iPTMnet" id="O23627"/>
<dbReference type="MetOSite" id="O23627"/>
<dbReference type="SwissPalm" id="O23627"/>
<dbReference type="PaxDb" id="3702-AT1G29880.1"/>
<dbReference type="ProteomicsDB" id="233040">
    <molecule id="O23627-1"/>
</dbReference>
<dbReference type="EnsemblPlants" id="AT1G29880.1">
    <molecule id="O23627-1"/>
    <property type="protein sequence ID" value="AT1G29880.1"/>
    <property type="gene ID" value="AT1G29880"/>
</dbReference>
<dbReference type="GeneID" id="839866"/>
<dbReference type="Gramene" id="AT1G29880.1">
    <molecule id="O23627-1"/>
    <property type="protein sequence ID" value="AT1G29880.1"/>
    <property type="gene ID" value="AT1G29880"/>
</dbReference>
<dbReference type="KEGG" id="ath:AT1G29880"/>
<dbReference type="Araport" id="AT1G29880"/>
<dbReference type="TAIR" id="AT1G29880"/>
<dbReference type="eggNOG" id="KOG2298">
    <property type="taxonomic scope" value="Eukaryota"/>
</dbReference>
<dbReference type="HOGENOM" id="CLU_015515_1_0_1"/>
<dbReference type="InParanoid" id="O23627"/>
<dbReference type="OMA" id="CIGKSYR"/>
<dbReference type="PhylomeDB" id="O23627"/>
<dbReference type="BRENDA" id="6.1.1.14">
    <property type="organism ID" value="399"/>
</dbReference>
<dbReference type="CD-CODE" id="4299E36E">
    <property type="entry name" value="Nucleolus"/>
</dbReference>
<dbReference type="PRO" id="PR:O23627"/>
<dbReference type="Proteomes" id="UP000006548">
    <property type="component" value="Chromosome 1"/>
</dbReference>
<dbReference type="ExpressionAtlas" id="O23627">
    <property type="expression patterns" value="baseline and differential"/>
</dbReference>
<dbReference type="GO" id="GO:0009507">
    <property type="term" value="C:chloroplast"/>
    <property type="evidence" value="ECO:0007005"/>
    <property type="project" value="TAIR"/>
</dbReference>
<dbReference type="GO" id="GO:0005829">
    <property type="term" value="C:cytosol"/>
    <property type="evidence" value="ECO:0007669"/>
    <property type="project" value="UniProtKB-SubCell"/>
</dbReference>
<dbReference type="GO" id="GO:0005768">
    <property type="term" value="C:endosome"/>
    <property type="evidence" value="ECO:0007005"/>
    <property type="project" value="TAIR"/>
</dbReference>
<dbReference type="GO" id="GO:0005794">
    <property type="term" value="C:Golgi apparatus"/>
    <property type="evidence" value="ECO:0007005"/>
    <property type="project" value="TAIR"/>
</dbReference>
<dbReference type="GO" id="GO:0005739">
    <property type="term" value="C:mitochondrion"/>
    <property type="evidence" value="ECO:0000314"/>
    <property type="project" value="TAIR"/>
</dbReference>
<dbReference type="GO" id="GO:0005634">
    <property type="term" value="C:nucleus"/>
    <property type="evidence" value="ECO:0007005"/>
    <property type="project" value="TAIR"/>
</dbReference>
<dbReference type="GO" id="GO:0005802">
    <property type="term" value="C:trans-Golgi network"/>
    <property type="evidence" value="ECO:0007005"/>
    <property type="project" value="TAIR"/>
</dbReference>
<dbReference type="GO" id="GO:0005524">
    <property type="term" value="F:ATP binding"/>
    <property type="evidence" value="ECO:0007669"/>
    <property type="project" value="UniProtKB-KW"/>
</dbReference>
<dbReference type="GO" id="GO:0141192">
    <property type="term" value="F:ATP:ATP adenylyltransferase activity"/>
    <property type="evidence" value="ECO:0007669"/>
    <property type="project" value="RHEA"/>
</dbReference>
<dbReference type="GO" id="GO:0004820">
    <property type="term" value="F:glycine-tRNA ligase activity"/>
    <property type="evidence" value="ECO:0000250"/>
    <property type="project" value="UniProtKB"/>
</dbReference>
<dbReference type="GO" id="GO:0046983">
    <property type="term" value="F:protein dimerization activity"/>
    <property type="evidence" value="ECO:0000250"/>
    <property type="project" value="UniProtKB"/>
</dbReference>
<dbReference type="GO" id="GO:0015966">
    <property type="term" value="P:diadenosine tetraphosphate biosynthetic process"/>
    <property type="evidence" value="ECO:0000250"/>
    <property type="project" value="UniProtKB"/>
</dbReference>
<dbReference type="GO" id="GO:0006426">
    <property type="term" value="P:glycyl-tRNA aminoacylation"/>
    <property type="evidence" value="ECO:0007669"/>
    <property type="project" value="InterPro"/>
</dbReference>
<dbReference type="CDD" id="cd00774">
    <property type="entry name" value="GlyRS-like_core"/>
    <property type="match status" value="1"/>
</dbReference>
<dbReference type="CDD" id="cd00858">
    <property type="entry name" value="GlyRS_anticodon"/>
    <property type="match status" value="1"/>
</dbReference>
<dbReference type="FunFam" id="3.30.40.230:FF:000001">
    <property type="entry name" value="Glycine--tRNA ligase"/>
    <property type="match status" value="1"/>
</dbReference>
<dbReference type="FunFam" id="3.30.720.200:FF:000001">
    <property type="entry name" value="Glycine--tRNA ligase 2"/>
    <property type="match status" value="1"/>
</dbReference>
<dbReference type="FunFam" id="3.40.50.800:FF:000004">
    <property type="entry name" value="Glycine--tRNA ligase 2"/>
    <property type="match status" value="1"/>
</dbReference>
<dbReference type="FunFam" id="1.10.287.10:FF:000029">
    <property type="entry name" value="Glycine--tRNA ligase, mitochondrial 1"/>
    <property type="match status" value="1"/>
</dbReference>
<dbReference type="FunFam" id="3.30.930.10:FF:000010">
    <property type="entry name" value="Glycyl-tRNA synthetase 1"/>
    <property type="match status" value="1"/>
</dbReference>
<dbReference type="Gene3D" id="3.30.40.230">
    <property type="match status" value="1"/>
</dbReference>
<dbReference type="Gene3D" id="3.30.720.200">
    <property type="match status" value="1"/>
</dbReference>
<dbReference type="Gene3D" id="3.40.50.800">
    <property type="entry name" value="Anticodon-binding domain"/>
    <property type="match status" value="1"/>
</dbReference>
<dbReference type="Gene3D" id="3.30.930.10">
    <property type="entry name" value="Bira Bifunctional Protein, Domain 2"/>
    <property type="match status" value="1"/>
</dbReference>
<dbReference type="Gene3D" id="1.10.287.10">
    <property type="entry name" value="S15/NS1, RNA-binding"/>
    <property type="match status" value="1"/>
</dbReference>
<dbReference type="InterPro" id="IPR002314">
    <property type="entry name" value="aa-tRNA-synt_IIb"/>
</dbReference>
<dbReference type="InterPro" id="IPR006195">
    <property type="entry name" value="aa-tRNA-synth_II"/>
</dbReference>
<dbReference type="InterPro" id="IPR045864">
    <property type="entry name" value="aa-tRNA-synth_II/BPL/LPL"/>
</dbReference>
<dbReference type="InterPro" id="IPR004154">
    <property type="entry name" value="Anticodon-bd"/>
</dbReference>
<dbReference type="InterPro" id="IPR036621">
    <property type="entry name" value="Anticodon-bd_dom_sf"/>
</dbReference>
<dbReference type="InterPro" id="IPR027031">
    <property type="entry name" value="Gly-tRNA_synthase/POLG2"/>
</dbReference>
<dbReference type="InterPro" id="IPR033731">
    <property type="entry name" value="GlyRS-like_core"/>
</dbReference>
<dbReference type="InterPro" id="IPR002315">
    <property type="entry name" value="tRNA-synt_gly"/>
</dbReference>
<dbReference type="InterPro" id="IPR009068">
    <property type="entry name" value="uS15_NS1_RNA-bd_sf"/>
</dbReference>
<dbReference type="InterPro" id="IPR000738">
    <property type="entry name" value="WHEP-TRS_dom"/>
</dbReference>
<dbReference type="NCBIfam" id="TIGR00389">
    <property type="entry name" value="glyS_dimeric"/>
    <property type="match status" value="1"/>
</dbReference>
<dbReference type="NCBIfam" id="NF003211">
    <property type="entry name" value="PRK04173.1"/>
    <property type="match status" value="1"/>
</dbReference>
<dbReference type="PANTHER" id="PTHR10745:SF0">
    <property type="entry name" value="GLYCINE--TRNA LIGASE"/>
    <property type="match status" value="1"/>
</dbReference>
<dbReference type="PANTHER" id="PTHR10745">
    <property type="entry name" value="GLYCYL-TRNA SYNTHETASE/DNA POLYMERASE SUBUNIT GAMMA-2"/>
    <property type="match status" value="1"/>
</dbReference>
<dbReference type="Pfam" id="PF03129">
    <property type="entry name" value="HGTP_anticodon"/>
    <property type="match status" value="1"/>
</dbReference>
<dbReference type="Pfam" id="PF00587">
    <property type="entry name" value="tRNA-synt_2b"/>
    <property type="match status" value="1"/>
</dbReference>
<dbReference type="Pfam" id="PF00458">
    <property type="entry name" value="WHEP-TRS"/>
    <property type="match status" value="1"/>
</dbReference>
<dbReference type="PRINTS" id="PR01043">
    <property type="entry name" value="TRNASYNTHGLY"/>
</dbReference>
<dbReference type="SMART" id="SM00991">
    <property type="entry name" value="WHEP-TRS"/>
    <property type="match status" value="1"/>
</dbReference>
<dbReference type="SUPFAM" id="SSF52954">
    <property type="entry name" value="Class II aaRS ABD-related"/>
    <property type="match status" value="1"/>
</dbReference>
<dbReference type="SUPFAM" id="SSF55681">
    <property type="entry name" value="Class II aaRS and biotin synthetases"/>
    <property type="match status" value="1"/>
</dbReference>
<dbReference type="SUPFAM" id="SSF47060">
    <property type="entry name" value="S15/NS1 RNA-binding domain"/>
    <property type="match status" value="1"/>
</dbReference>
<dbReference type="PROSITE" id="PS50862">
    <property type="entry name" value="AA_TRNA_LIGASE_II"/>
    <property type="match status" value="1"/>
</dbReference>
<dbReference type="PROSITE" id="PS00762">
    <property type="entry name" value="WHEP_TRS_1"/>
    <property type="match status" value="1"/>
</dbReference>
<dbReference type="PROSITE" id="PS51185">
    <property type="entry name" value="WHEP_TRS_2"/>
    <property type="match status" value="1"/>
</dbReference>
<protein>
    <recommendedName>
        <fullName evidence="6">Glycine--tRNA ligase, mitochondrial 1</fullName>
        <ecNumber evidence="4">6.1.1.14</ecNumber>
    </recommendedName>
    <alternativeName>
        <fullName evidence="6">Diadenosine tetraphosphate synthetase</fullName>
        <shortName evidence="6">Ap4A synthetase</shortName>
        <ecNumber evidence="1">2.7.7.-</ecNumber>
    </alternativeName>
    <alternativeName>
        <fullName evidence="5">Glycyl-tRNA synthetase 1</fullName>
        <shortName evidence="5">GlyRS-1</shortName>
    </alternativeName>
</protein>
<sequence>MRIFSTFVFHRRQQIFNLRQFQTTTILRNPISIAPIQIPMDATEQSLRQSLSEKSSSVEAQGNAVRALKASRAAKPEIDAAIEQLNKLKLEKSTVEKELQSIISSSGNGSLNREAFRKAVVNTLERRLFYIPSFKIYSGVAGLFDYGPPGCAIKSNVLSFWRQHFILEENMLEVDCPCVTPEVVLKASGHVDKFTDLMVKDEKTGTCYRADHLLKDYCTEKLEKDLTISAEKAAELKDVLAVMEDFSPEQLGAKIREYGITAPDTKNPLSDPYPFNLMFQTSIGPSGLIPGYMRPETAQGIFVNFKDLYYYNGKKLPFAAAQIGQAFRNEISPRQGLLRVREFTLAEIEHFVDPENKSHPKFSDVAKLEFLMFPREEQMSGQSAKKLCLGEAVAKGTVNNETLGYFIGRVYLFLTRLGIDKERLRFRQHLANEMAHYAADCWDAEIESSYGWIECVGIADRSAYDLRAHSDKSGTPLVAEEKFAEPKEVEKLVITPVKKELGLAFKGNQKNVVESLEAMNEEEAMEMKATLESKGEVEFYVCTLKKSVNIKKNMVSISKEKKKEHQRVFTPSVIEPSFGIGRIIYCLYEHCFSTRPSKAGDEQLNLFRFPPLVAPIKCTVFPLVQNQQFEEVAKVISKELASVGISHKIDITGTSIGKRYARTDELGVPFAITVDSDTSVTIRERDSKDQVRVTLKEAASVVSSVSEGKMTWQDVWATFPHHSSAAADE</sequence>
<proteinExistence type="evidence at protein level"/>
<evidence type="ECO:0000250" key="1">
    <source>
        <dbReference type="UniProtKB" id="P41250"/>
    </source>
</evidence>
<evidence type="ECO:0000255" key="2"/>
<evidence type="ECO:0000255" key="3">
    <source>
        <dbReference type="PROSITE-ProRule" id="PRU00531"/>
    </source>
</evidence>
<evidence type="ECO:0000269" key="4">
    <source>
    </source>
</evidence>
<evidence type="ECO:0000303" key="5">
    <source>
    </source>
</evidence>
<evidence type="ECO:0000305" key="6"/>
<evidence type="ECO:0007744" key="7">
    <source>
    </source>
</evidence>
<organism>
    <name type="scientific">Arabidopsis thaliana</name>
    <name type="common">Mouse-ear cress</name>
    <dbReference type="NCBI Taxonomy" id="3702"/>
    <lineage>
        <taxon>Eukaryota</taxon>
        <taxon>Viridiplantae</taxon>
        <taxon>Streptophyta</taxon>
        <taxon>Embryophyta</taxon>
        <taxon>Tracheophyta</taxon>
        <taxon>Spermatophyta</taxon>
        <taxon>Magnoliopsida</taxon>
        <taxon>eudicotyledons</taxon>
        <taxon>Gunneridae</taxon>
        <taxon>Pentapetalae</taxon>
        <taxon>rosids</taxon>
        <taxon>malvids</taxon>
        <taxon>Brassicales</taxon>
        <taxon>Brassicaceae</taxon>
        <taxon>Camelineae</taxon>
        <taxon>Arabidopsis</taxon>
    </lineage>
</organism>
<gene>
    <name type="ordered locus">At1g29880</name>
    <name type="ORF">F1N18.8</name>
</gene>
<feature type="transit peptide" description="Mitochondrion" evidence="2">
    <location>
        <begin position="1"/>
        <end position="28"/>
    </location>
</feature>
<feature type="chain" id="PRO_0000035802" description="Glycine--tRNA ligase, mitochondrial 1">
    <location>
        <begin position="29"/>
        <end position="729"/>
    </location>
</feature>
<feature type="domain" description="WHEP-TRS" evidence="3">
    <location>
        <begin position="50"/>
        <end position="106"/>
    </location>
</feature>
<feature type="binding site" evidence="1">
    <location>
        <position position="296"/>
    </location>
    <ligand>
        <name>glycine</name>
        <dbReference type="ChEBI" id="CHEBI:57305"/>
    </ligand>
</feature>
<feature type="binding site" evidence="1">
    <location>
        <begin position="328"/>
        <end position="330"/>
    </location>
    <ligand>
        <name>ATP</name>
        <dbReference type="ChEBI" id="CHEBI:30616"/>
    </ligand>
</feature>
<feature type="binding site" evidence="1">
    <location>
        <begin position="339"/>
        <end position="340"/>
    </location>
    <ligand>
        <name>ATP</name>
        <dbReference type="ChEBI" id="CHEBI:30616"/>
    </ligand>
</feature>
<feature type="binding site" evidence="1">
    <location>
        <position position="347"/>
    </location>
    <ligand>
        <name>glycine</name>
        <dbReference type="ChEBI" id="CHEBI:57305"/>
    </ligand>
</feature>
<feature type="binding site" evidence="1">
    <location>
        <begin position="454"/>
        <end position="455"/>
    </location>
    <ligand>
        <name>ATP</name>
        <dbReference type="ChEBI" id="CHEBI:30616"/>
    </ligand>
</feature>
<feature type="binding site" evidence="1">
    <location>
        <begin position="575"/>
        <end position="577"/>
    </location>
    <ligand>
        <name>glycine</name>
        <dbReference type="ChEBI" id="CHEBI:57305"/>
    </ligand>
</feature>
<feature type="binding site" evidence="1">
    <location>
        <position position="582"/>
    </location>
    <ligand>
        <name>ATP</name>
        <dbReference type="ChEBI" id="CHEBI:30616"/>
    </ligand>
</feature>
<feature type="splice variant" id="VSP_018906" description="In isoform Cytoplasmic." evidence="6">
    <location>
        <begin position="1"/>
        <end position="39"/>
    </location>
</feature>
<feature type="sequence conflict" description="In Ref. 5; AAM64494." evidence="6" ref="5">
    <original>M</original>
    <variation>T</variation>
    <location>
        <position position="1"/>
    </location>
</feature>
<feature type="sequence conflict" description="In Ref. 4; AAK92832." evidence="6" ref="4">
    <original>I</original>
    <variation>M</variation>
    <location>
        <position position="82"/>
    </location>
</feature>
<feature type="sequence conflict" description="In Ref. 5; AAM64494." evidence="6" ref="5">
    <original>V</original>
    <variation>A</variation>
    <location>
        <position position="632"/>
    </location>
</feature>
<feature type="modified residue" description="N-acetylmethionine" evidence="7">
    <location sequence="O23627-2">
        <position position="1"/>
    </location>
</feature>
<name>SYGM1_ARATH</name>
<accession>O23627</accession>
<accession>Q8LBY0</accession>
<accession>Q949T7</accession>
<comment type="function">
    <text evidence="1">Catalyzes the ATP-dependent ligation of glycine to the 3'-end of its cognate tRNA, via the formation of an aminoacyl-adenylate intermediate (Gly-AMP). Also produces diadenosine tetraphosphate (Ap4A), a universal pleiotropic signaling molecule needed for cell regulation pathways, by direct condensation of 2 ATPs. Thereby, may play a special role in Ap4A homeostasis.</text>
</comment>
<comment type="catalytic activity">
    <reaction evidence="4">
        <text>tRNA(Gly) + glycine + ATP = glycyl-tRNA(Gly) + AMP + diphosphate</text>
        <dbReference type="Rhea" id="RHEA:16013"/>
        <dbReference type="Rhea" id="RHEA-COMP:9664"/>
        <dbReference type="Rhea" id="RHEA-COMP:9683"/>
        <dbReference type="ChEBI" id="CHEBI:30616"/>
        <dbReference type="ChEBI" id="CHEBI:33019"/>
        <dbReference type="ChEBI" id="CHEBI:57305"/>
        <dbReference type="ChEBI" id="CHEBI:78442"/>
        <dbReference type="ChEBI" id="CHEBI:78522"/>
        <dbReference type="ChEBI" id="CHEBI:456215"/>
        <dbReference type="EC" id="6.1.1.14"/>
    </reaction>
</comment>
<comment type="catalytic activity">
    <reaction evidence="1">
        <text>2 ATP + H(+) = P(1),P(4)-bis(5'-adenosyl) tetraphosphate + diphosphate</text>
        <dbReference type="Rhea" id="RHEA:34935"/>
        <dbReference type="ChEBI" id="CHEBI:15378"/>
        <dbReference type="ChEBI" id="CHEBI:30616"/>
        <dbReference type="ChEBI" id="CHEBI:33019"/>
        <dbReference type="ChEBI" id="CHEBI:58141"/>
    </reaction>
</comment>
<comment type="subunit">
    <text evidence="1">Homodimer.</text>
</comment>
<comment type="subcellular location">
    <subcellularLocation>
        <location evidence="4">Mitochondrion</location>
    </subcellularLocation>
    <subcellularLocation>
        <location evidence="4">Cytoplasm</location>
        <location evidence="4">Cytosol</location>
    </subcellularLocation>
</comment>
<comment type="alternative products">
    <event type="alternative initiation"/>
    <isoform>
        <id>O23627-1</id>
        <name>Mitochondrial</name>
        <sequence type="displayed"/>
    </isoform>
    <isoform>
        <id>O23627-2</id>
        <name>Cytoplasmic</name>
        <sequence type="described" ref="VSP_018906"/>
    </isoform>
</comment>
<comment type="similarity">
    <text evidence="6">Belongs to the class-II aminoacyl-tRNA synthetase family.</text>
</comment>
<comment type="sequence caution" evidence="6">
    <conflict type="erroneous initiation">
        <sequence resource="EMBL-CDS" id="AAM64494"/>
    </conflict>
    <text>Truncated N-terminus.</text>
</comment>
<keyword id="KW-0007">Acetylation</keyword>
<keyword id="KW-0024">Alternative initiation</keyword>
<keyword id="KW-0030">Aminoacyl-tRNA synthetase</keyword>
<keyword id="KW-0067">ATP-binding</keyword>
<keyword id="KW-0963">Cytoplasm</keyword>
<keyword id="KW-0436">Ligase</keyword>
<keyword id="KW-0496">Mitochondrion</keyword>
<keyword id="KW-0547">Nucleotide-binding</keyword>
<keyword id="KW-0648">Protein biosynthesis</keyword>
<keyword id="KW-1185">Reference proteome</keyword>
<keyword id="KW-0808">Transferase</keyword>
<keyword id="KW-0809">Transit peptide</keyword>
<reference key="1">
    <citation type="online journal article" date="1997" name="Plant Gene Register">
        <title>Isolation and characterization of a glycyl-tRNA synthetase sequence from Arabidopsis thaliana.</title>
        <authorList>
            <person name="Duchene A.-M."/>
            <person name="Dietrich A."/>
        </authorList>
        <locator>PGR97-183</locator>
    </citation>
    <scope>NUCLEOTIDE SEQUENCE [MRNA]</scope>
    <source>
        <strain>cv. Columbia</strain>
    </source>
</reference>
<reference key="2">
    <citation type="journal article" date="2000" name="Nature">
        <title>Sequence and analysis of chromosome 1 of the plant Arabidopsis thaliana.</title>
        <authorList>
            <person name="Theologis A."/>
            <person name="Ecker J.R."/>
            <person name="Palm C.J."/>
            <person name="Federspiel N.A."/>
            <person name="Kaul S."/>
            <person name="White O."/>
            <person name="Alonso J."/>
            <person name="Altafi H."/>
            <person name="Araujo R."/>
            <person name="Bowman C.L."/>
            <person name="Brooks S.Y."/>
            <person name="Buehler E."/>
            <person name="Chan A."/>
            <person name="Chao Q."/>
            <person name="Chen H."/>
            <person name="Cheuk R.F."/>
            <person name="Chin C.W."/>
            <person name="Chung M.K."/>
            <person name="Conn L."/>
            <person name="Conway A.B."/>
            <person name="Conway A.R."/>
            <person name="Creasy T.H."/>
            <person name="Dewar K."/>
            <person name="Dunn P."/>
            <person name="Etgu P."/>
            <person name="Feldblyum T.V."/>
            <person name="Feng J.-D."/>
            <person name="Fong B."/>
            <person name="Fujii C.Y."/>
            <person name="Gill J.E."/>
            <person name="Goldsmith A.D."/>
            <person name="Haas B."/>
            <person name="Hansen N.F."/>
            <person name="Hughes B."/>
            <person name="Huizar L."/>
            <person name="Hunter J.L."/>
            <person name="Jenkins J."/>
            <person name="Johnson-Hopson C."/>
            <person name="Khan S."/>
            <person name="Khaykin E."/>
            <person name="Kim C.J."/>
            <person name="Koo H.L."/>
            <person name="Kremenetskaia I."/>
            <person name="Kurtz D.B."/>
            <person name="Kwan A."/>
            <person name="Lam B."/>
            <person name="Langin-Hooper S."/>
            <person name="Lee A."/>
            <person name="Lee J.M."/>
            <person name="Lenz C.A."/>
            <person name="Li J.H."/>
            <person name="Li Y.-P."/>
            <person name="Lin X."/>
            <person name="Liu S.X."/>
            <person name="Liu Z.A."/>
            <person name="Luros J.S."/>
            <person name="Maiti R."/>
            <person name="Marziali A."/>
            <person name="Militscher J."/>
            <person name="Miranda M."/>
            <person name="Nguyen M."/>
            <person name="Nierman W.C."/>
            <person name="Osborne B.I."/>
            <person name="Pai G."/>
            <person name="Peterson J."/>
            <person name="Pham P.K."/>
            <person name="Rizzo M."/>
            <person name="Rooney T."/>
            <person name="Rowley D."/>
            <person name="Sakano H."/>
            <person name="Salzberg S.L."/>
            <person name="Schwartz J.R."/>
            <person name="Shinn P."/>
            <person name="Southwick A.M."/>
            <person name="Sun H."/>
            <person name="Tallon L.J."/>
            <person name="Tambunga G."/>
            <person name="Toriumi M.J."/>
            <person name="Town C.D."/>
            <person name="Utterback T."/>
            <person name="Van Aken S."/>
            <person name="Vaysberg M."/>
            <person name="Vysotskaia V.S."/>
            <person name="Walker M."/>
            <person name="Wu D."/>
            <person name="Yu G."/>
            <person name="Fraser C.M."/>
            <person name="Venter J.C."/>
            <person name="Davis R.W."/>
        </authorList>
    </citation>
    <scope>NUCLEOTIDE SEQUENCE [LARGE SCALE GENOMIC DNA]</scope>
    <source>
        <strain>cv. Columbia</strain>
    </source>
</reference>
<reference key="3">
    <citation type="journal article" date="2017" name="Plant J.">
        <title>Araport11: a complete reannotation of the Arabidopsis thaliana reference genome.</title>
        <authorList>
            <person name="Cheng C.Y."/>
            <person name="Krishnakumar V."/>
            <person name="Chan A.P."/>
            <person name="Thibaud-Nissen F."/>
            <person name="Schobel S."/>
            <person name="Town C.D."/>
        </authorList>
    </citation>
    <scope>GENOME REANNOTATION</scope>
    <source>
        <strain>cv. Columbia</strain>
    </source>
</reference>
<reference key="4">
    <citation type="journal article" date="2003" name="Science">
        <title>Empirical analysis of transcriptional activity in the Arabidopsis genome.</title>
        <authorList>
            <person name="Yamada K."/>
            <person name="Lim J."/>
            <person name="Dale J.M."/>
            <person name="Chen H."/>
            <person name="Shinn P."/>
            <person name="Palm C.J."/>
            <person name="Southwick A.M."/>
            <person name="Wu H.C."/>
            <person name="Kim C.J."/>
            <person name="Nguyen M."/>
            <person name="Pham P.K."/>
            <person name="Cheuk R.F."/>
            <person name="Karlin-Newmann G."/>
            <person name="Liu S.X."/>
            <person name="Lam B."/>
            <person name="Sakano H."/>
            <person name="Wu T."/>
            <person name="Yu G."/>
            <person name="Miranda M."/>
            <person name="Quach H.L."/>
            <person name="Tripp M."/>
            <person name="Chang C.H."/>
            <person name="Lee J.M."/>
            <person name="Toriumi M.J."/>
            <person name="Chan M.M."/>
            <person name="Tang C.C."/>
            <person name="Onodera C.S."/>
            <person name="Deng J.M."/>
            <person name="Akiyama K."/>
            <person name="Ansari Y."/>
            <person name="Arakawa T."/>
            <person name="Banh J."/>
            <person name="Banno F."/>
            <person name="Bowser L."/>
            <person name="Brooks S.Y."/>
            <person name="Carninci P."/>
            <person name="Chao Q."/>
            <person name="Choy N."/>
            <person name="Enju A."/>
            <person name="Goldsmith A.D."/>
            <person name="Gurjal M."/>
            <person name="Hansen N.F."/>
            <person name="Hayashizaki Y."/>
            <person name="Johnson-Hopson C."/>
            <person name="Hsuan V.W."/>
            <person name="Iida K."/>
            <person name="Karnes M."/>
            <person name="Khan S."/>
            <person name="Koesema E."/>
            <person name="Ishida J."/>
            <person name="Jiang P.X."/>
            <person name="Jones T."/>
            <person name="Kawai J."/>
            <person name="Kamiya A."/>
            <person name="Meyers C."/>
            <person name="Nakajima M."/>
            <person name="Narusaka M."/>
            <person name="Seki M."/>
            <person name="Sakurai T."/>
            <person name="Satou M."/>
            <person name="Tamse R."/>
            <person name="Vaysberg M."/>
            <person name="Wallender E.K."/>
            <person name="Wong C."/>
            <person name="Yamamura Y."/>
            <person name="Yuan S."/>
            <person name="Shinozaki K."/>
            <person name="Davis R.W."/>
            <person name="Theologis A."/>
            <person name="Ecker J.R."/>
        </authorList>
    </citation>
    <scope>NUCLEOTIDE SEQUENCE [LARGE SCALE MRNA]</scope>
    <source>
        <strain>cv. Columbia</strain>
    </source>
</reference>
<reference key="5">
    <citation type="submission" date="2002-03" db="EMBL/GenBank/DDBJ databases">
        <title>Full-length cDNA from Arabidopsis thaliana.</title>
        <authorList>
            <person name="Brover V.V."/>
            <person name="Troukhan M.E."/>
            <person name="Alexandrov N.A."/>
            <person name="Lu Y.-P."/>
            <person name="Flavell R.B."/>
            <person name="Feldmann K.A."/>
        </authorList>
    </citation>
    <scope>NUCLEOTIDE SEQUENCE [LARGE SCALE MRNA]</scope>
</reference>
<reference key="6">
    <citation type="journal article" date="2001" name="J. Biol. Chem.">
        <title>Overlapping destinations for two dual targeted glycyl-tRNA synthetases in Arabidopsis thaliana and Phaseolus vulgaris.</title>
        <authorList>
            <person name="Duchene A.-M."/>
            <person name="Peeters N."/>
            <person name="Dietrich A."/>
            <person name="Cosset A."/>
            <person name="Small I.D."/>
            <person name="Wintz H."/>
        </authorList>
    </citation>
    <scope>CATALYTIC ACTIVITY</scope>
    <scope>SUBCELLULAR LOCATION</scope>
</reference>
<reference key="7">
    <citation type="journal article" date="2012" name="Mol. Cell. Proteomics">
        <title>Comparative large-scale characterisation of plant vs. mammal proteins reveals similar and idiosyncratic N-alpha acetylation features.</title>
        <authorList>
            <person name="Bienvenut W.V."/>
            <person name="Sumpton D."/>
            <person name="Martinez A."/>
            <person name="Lilla S."/>
            <person name="Espagne C."/>
            <person name="Meinnel T."/>
            <person name="Giglione C."/>
        </authorList>
    </citation>
    <scope>ACETYLATION [LARGE SCALE ANALYSIS] AT MET-1 (ISOFORM CYTOPLASMIC)</scope>
    <scope>IDENTIFICATION BY MASS SPECTROMETRY [LARGE SCALE ANALYSIS]</scope>
</reference>